<reference key="1">
    <citation type="submission" date="2007-12" db="EMBL/GenBank/DDBJ databases">
        <title>Brucella suis ATCC 23445 whole genome shotgun sequencing project.</title>
        <authorList>
            <person name="Setubal J.C."/>
            <person name="Bowns C."/>
            <person name="Boyle S."/>
            <person name="Crasta O.R."/>
            <person name="Czar M.J."/>
            <person name="Dharmanolla C."/>
            <person name="Gillespie J.J."/>
            <person name="Kenyon R.W."/>
            <person name="Lu J."/>
            <person name="Mane S."/>
            <person name="Mohapatra S."/>
            <person name="Nagrani S."/>
            <person name="Purkayastha A."/>
            <person name="Rajasimha H.K."/>
            <person name="Shallom J.M."/>
            <person name="Shallom S."/>
            <person name="Shukla M."/>
            <person name="Snyder E.E."/>
            <person name="Sobral B.W."/>
            <person name="Wattam A.R."/>
            <person name="Will R."/>
            <person name="Williams K."/>
            <person name="Yoo H."/>
            <person name="Bruce D."/>
            <person name="Detter C."/>
            <person name="Munk C."/>
            <person name="Brettin T.S."/>
        </authorList>
    </citation>
    <scope>NUCLEOTIDE SEQUENCE [LARGE SCALE GENOMIC DNA]</scope>
    <source>
        <strain>ATCC 23445 / NCTC 10510</strain>
    </source>
</reference>
<evidence type="ECO:0000255" key="1">
    <source>
        <dbReference type="HAMAP-Rule" id="MF_00005"/>
    </source>
</evidence>
<organism>
    <name type="scientific">Brucella suis (strain ATCC 23445 / NCTC 10510)</name>
    <dbReference type="NCBI Taxonomy" id="470137"/>
    <lineage>
        <taxon>Bacteria</taxon>
        <taxon>Pseudomonadati</taxon>
        <taxon>Pseudomonadota</taxon>
        <taxon>Alphaproteobacteria</taxon>
        <taxon>Hyphomicrobiales</taxon>
        <taxon>Brucellaceae</taxon>
        <taxon>Brucella/Ochrobactrum group</taxon>
        <taxon>Brucella</taxon>
    </lineage>
</organism>
<accession>B0CII7</accession>
<sequence length="406" mass="45273">MSKWKDVKKVVLAYSGGLDTSIILKWLQTELGAEVVTFTADLGQGEELEPARKKAEMLGIKEIFIEDVREEFVRDFVFPMFRANAVYEGVYLLGTSIARPLISKHLIDIAKKTGADAIAHGATGKGNDQVRFELSAYALNPDIKIIAPWRDWSFKSRTQLLEFAEQHQIPVAKDKKGEAPFSVDANLLHSSSEGKVLEDPSQEAPEYVHMRTISPETAPDKATIIKIGFEKGDAVSINGERLSPATLLAKLNDYGRDNGIGRLDLVENRFVGMKSRGVYETPGGTILLAAHRAIESITLDRGAAHLKDELMPRYAELIYYGFWFSPEREMLQAAIDHSQRHVEGEVTLKLYKGNVMVIGRESAKSLYSDKLVTFEDDQGAYDQKDAAGFIKLNALRLRTLAARDRK</sequence>
<comment type="catalytic activity">
    <reaction evidence="1">
        <text>L-citrulline + L-aspartate + ATP = 2-(N(omega)-L-arginino)succinate + AMP + diphosphate + H(+)</text>
        <dbReference type="Rhea" id="RHEA:10932"/>
        <dbReference type="ChEBI" id="CHEBI:15378"/>
        <dbReference type="ChEBI" id="CHEBI:29991"/>
        <dbReference type="ChEBI" id="CHEBI:30616"/>
        <dbReference type="ChEBI" id="CHEBI:33019"/>
        <dbReference type="ChEBI" id="CHEBI:57472"/>
        <dbReference type="ChEBI" id="CHEBI:57743"/>
        <dbReference type="ChEBI" id="CHEBI:456215"/>
        <dbReference type="EC" id="6.3.4.5"/>
    </reaction>
</comment>
<comment type="pathway">
    <text evidence="1">Amino-acid biosynthesis; L-arginine biosynthesis; L-arginine from L-ornithine and carbamoyl phosphate: step 2/3.</text>
</comment>
<comment type="subunit">
    <text evidence="1">Homotetramer.</text>
</comment>
<comment type="subcellular location">
    <subcellularLocation>
        <location evidence="1">Cytoplasm</location>
    </subcellularLocation>
</comment>
<comment type="similarity">
    <text evidence="1">Belongs to the argininosuccinate synthase family. Type 1 subfamily.</text>
</comment>
<name>ASSY_BRUSI</name>
<proteinExistence type="inferred from homology"/>
<protein>
    <recommendedName>
        <fullName evidence="1">Argininosuccinate synthase</fullName>
        <ecNumber evidence="1">6.3.4.5</ecNumber>
    </recommendedName>
    <alternativeName>
        <fullName evidence="1">Citrulline--aspartate ligase</fullName>
    </alternativeName>
</protein>
<dbReference type="EC" id="6.3.4.5" evidence="1"/>
<dbReference type="EMBL" id="CP000911">
    <property type="protein sequence ID" value="ABY37183.1"/>
    <property type="molecule type" value="Genomic_DNA"/>
</dbReference>
<dbReference type="RefSeq" id="WP_002965322.1">
    <property type="nucleotide sequence ID" value="NC_010169.1"/>
</dbReference>
<dbReference type="SMR" id="B0CII7"/>
<dbReference type="KEGG" id="bmt:BSUIS_A0077"/>
<dbReference type="HOGENOM" id="CLU_032784_4_2_5"/>
<dbReference type="UniPathway" id="UPA00068">
    <property type="reaction ID" value="UER00113"/>
</dbReference>
<dbReference type="Proteomes" id="UP000008545">
    <property type="component" value="Chromosome I"/>
</dbReference>
<dbReference type="GO" id="GO:0005737">
    <property type="term" value="C:cytoplasm"/>
    <property type="evidence" value="ECO:0007669"/>
    <property type="project" value="UniProtKB-SubCell"/>
</dbReference>
<dbReference type="GO" id="GO:0004055">
    <property type="term" value="F:argininosuccinate synthase activity"/>
    <property type="evidence" value="ECO:0007669"/>
    <property type="project" value="UniProtKB-UniRule"/>
</dbReference>
<dbReference type="GO" id="GO:0005524">
    <property type="term" value="F:ATP binding"/>
    <property type="evidence" value="ECO:0007669"/>
    <property type="project" value="UniProtKB-UniRule"/>
</dbReference>
<dbReference type="GO" id="GO:0000053">
    <property type="term" value="P:argininosuccinate metabolic process"/>
    <property type="evidence" value="ECO:0007669"/>
    <property type="project" value="TreeGrafter"/>
</dbReference>
<dbReference type="GO" id="GO:0006526">
    <property type="term" value="P:L-arginine biosynthetic process"/>
    <property type="evidence" value="ECO:0007669"/>
    <property type="project" value="UniProtKB-UniRule"/>
</dbReference>
<dbReference type="GO" id="GO:0000050">
    <property type="term" value="P:urea cycle"/>
    <property type="evidence" value="ECO:0007669"/>
    <property type="project" value="TreeGrafter"/>
</dbReference>
<dbReference type="CDD" id="cd01999">
    <property type="entry name" value="ASS"/>
    <property type="match status" value="1"/>
</dbReference>
<dbReference type="FunFam" id="3.40.50.620:FF:000019">
    <property type="entry name" value="Argininosuccinate synthase"/>
    <property type="match status" value="1"/>
</dbReference>
<dbReference type="FunFam" id="3.90.1260.10:FF:000007">
    <property type="entry name" value="Argininosuccinate synthase"/>
    <property type="match status" value="1"/>
</dbReference>
<dbReference type="Gene3D" id="3.90.1260.10">
    <property type="entry name" value="Argininosuccinate synthetase, chain A, domain 2"/>
    <property type="match status" value="1"/>
</dbReference>
<dbReference type="Gene3D" id="3.40.50.620">
    <property type="entry name" value="HUPs"/>
    <property type="match status" value="1"/>
</dbReference>
<dbReference type="Gene3D" id="1.20.5.470">
    <property type="entry name" value="Single helix bin"/>
    <property type="match status" value="1"/>
</dbReference>
<dbReference type="HAMAP" id="MF_00005">
    <property type="entry name" value="Arg_succ_synth_type1"/>
    <property type="match status" value="1"/>
</dbReference>
<dbReference type="InterPro" id="IPR048268">
    <property type="entry name" value="Arginosuc_syn_C"/>
</dbReference>
<dbReference type="InterPro" id="IPR048267">
    <property type="entry name" value="Arginosuc_syn_N"/>
</dbReference>
<dbReference type="InterPro" id="IPR001518">
    <property type="entry name" value="Arginosuc_synth"/>
</dbReference>
<dbReference type="InterPro" id="IPR018223">
    <property type="entry name" value="Arginosuc_synth_CS"/>
</dbReference>
<dbReference type="InterPro" id="IPR023434">
    <property type="entry name" value="Arginosuc_synth_type_1_subfam"/>
</dbReference>
<dbReference type="InterPro" id="IPR024074">
    <property type="entry name" value="AS_cat/multimer_dom_body"/>
</dbReference>
<dbReference type="InterPro" id="IPR014729">
    <property type="entry name" value="Rossmann-like_a/b/a_fold"/>
</dbReference>
<dbReference type="NCBIfam" id="TIGR00032">
    <property type="entry name" value="argG"/>
    <property type="match status" value="1"/>
</dbReference>
<dbReference type="NCBIfam" id="NF001770">
    <property type="entry name" value="PRK00509.1"/>
    <property type="match status" value="1"/>
</dbReference>
<dbReference type="PANTHER" id="PTHR11587">
    <property type="entry name" value="ARGININOSUCCINATE SYNTHASE"/>
    <property type="match status" value="1"/>
</dbReference>
<dbReference type="PANTHER" id="PTHR11587:SF2">
    <property type="entry name" value="ARGININOSUCCINATE SYNTHASE"/>
    <property type="match status" value="1"/>
</dbReference>
<dbReference type="Pfam" id="PF20979">
    <property type="entry name" value="Arginosuc_syn_C"/>
    <property type="match status" value="1"/>
</dbReference>
<dbReference type="Pfam" id="PF00764">
    <property type="entry name" value="Arginosuc_synth"/>
    <property type="match status" value="1"/>
</dbReference>
<dbReference type="SUPFAM" id="SSF52402">
    <property type="entry name" value="Adenine nucleotide alpha hydrolases-like"/>
    <property type="match status" value="1"/>
</dbReference>
<dbReference type="SUPFAM" id="SSF69864">
    <property type="entry name" value="Argininosuccinate synthetase, C-terminal domain"/>
    <property type="match status" value="1"/>
</dbReference>
<dbReference type="PROSITE" id="PS00564">
    <property type="entry name" value="ARGININOSUCCIN_SYN_1"/>
    <property type="match status" value="1"/>
</dbReference>
<dbReference type="PROSITE" id="PS00565">
    <property type="entry name" value="ARGININOSUCCIN_SYN_2"/>
    <property type="match status" value="1"/>
</dbReference>
<feature type="chain" id="PRO_1000073814" description="Argininosuccinate synthase">
    <location>
        <begin position="1"/>
        <end position="406"/>
    </location>
</feature>
<feature type="binding site" evidence="1">
    <location>
        <begin position="13"/>
        <end position="21"/>
    </location>
    <ligand>
        <name>ATP</name>
        <dbReference type="ChEBI" id="CHEBI:30616"/>
    </ligand>
</feature>
<feature type="binding site" evidence="1">
    <location>
        <position position="40"/>
    </location>
    <ligand>
        <name>ATP</name>
        <dbReference type="ChEBI" id="CHEBI:30616"/>
    </ligand>
</feature>
<feature type="binding site" evidence="1">
    <location>
        <position position="91"/>
    </location>
    <ligand>
        <name>L-citrulline</name>
        <dbReference type="ChEBI" id="CHEBI:57743"/>
    </ligand>
</feature>
<feature type="binding site" evidence="1">
    <location>
        <position position="96"/>
    </location>
    <ligand>
        <name>L-citrulline</name>
        <dbReference type="ChEBI" id="CHEBI:57743"/>
    </ligand>
</feature>
<feature type="binding site" evidence="1">
    <location>
        <position position="121"/>
    </location>
    <ligand>
        <name>ATP</name>
        <dbReference type="ChEBI" id="CHEBI:30616"/>
    </ligand>
</feature>
<feature type="binding site" evidence="1">
    <location>
        <position position="123"/>
    </location>
    <ligand>
        <name>L-aspartate</name>
        <dbReference type="ChEBI" id="CHEBI:29991"/>
    </ligand>
</feature>
<feature type="binding site" evidence="1">
    <location>
        <position position="127"/>
    </location>
    <ligand>
        <name>L-aspartate</name>
        <dbReference type="ChEBI" id="CHEBI:29991"/>
    </ligand>
</feature>
<feature type="binding site" evidence="1">
    <location>
        <position position="127"/>
    </location>
    <ligand>
        <name>L-citrulline</name>
        <dbReference type="ChEBI" id="CHEBI:57743"/>
    </ligand>
</feature>
<feature type="binding site" evidence="1">
    <location>
        <position position="128"/>
    </location>
    <ligand>
        <name>L-aspartate</name>
        <dbReference type="ChEBI" id="CHEBI:29991"/>
    </ligand>
</feature>
<feature type="binding site" evidence="1">
    <location>
        <position position="131"/>
    </location>
    <ligand>
        <name>L-citrulline</name>
        <dbReference type="ChEBI" id="CHEBI:57743"/>
    </ligand>
</feature>
<feature type="binding site" evidence="1">
    <location>
        <position position="182"/>
    </location>
    <ligand>
        <name>L-citrulline</name>
        <dbReference type="ChEBI" id="CHEBI:57743"/>
    </ligand>
</feature>
<feature type="binding site" evidence="1">
    <location>
        <position position="191"/>
    </location>
    <ligand>
        <name>L-citrulline</name>
        <dbReference type="ChEBI" id="CHEBI:57743"/>
    </ligand>
</feature>
<feature type="binding site" evidence="1">
    <location>
        <position position="267"/>
    </location>
    <ligand>
        <name>L-citrulline</name>
        <dbReference type="ChEBI" id="CHEBI:57743"/>
    </ligand>
</feature>
<feature type="binding site" evidence="1">
    <location>
        <position position="279"/>
    </location>
    <ligand>
        <name>L-citrulline</name>
        <dbReference type="ChEBI" id="CHEBI:57743"/>
    </ligand>
</feature>
<gene>
    <name evidence="1" type="primary">argG</name>
    <name type="ordered locus">BSUIS_A0077</name>
</gene>
<keyword id="KW-0028">Amino-acid biosynthesis</keyword>
<keyword id="KW-0055">Arginine biosynthesis</keyword>
<keyword id="KW-0067">ATP-binding</keyword>
<keyword id="KW-0963">Cytoplasm</keyword>
<keyword id="KW-0436">Ligase</keyword>
<keyword id="KW-0547">Nucleotide-binding</keyword>